<gene>
    <name evidence="1" type="primary">ade</name>
    <name type="ordered locus">CLL_A1394</name>
</gene>
<proteinExistence type="inferred from homology"/>
<accession>B2TJH6</accession>
<evidence type="ECO:0000255" key="1">
    <source>
        <dbReference type="HAMAP-Rule" id="MF_01518"/>
    </source>
</evidence>
<feature type="chain" id="PRO_1000146229" description="Adenine deaminase">
    <location>
        <begin position="1"/>
        <end position="581"/>
    </location>
</feature>
<organism>
    <name type="scientific">Clostridium botulinum (strain Eklund 17B / Type B)</name>
    <dbReference type="NCBI Taxonomy" id="935198"/>
    <lineage>
        <taxon>Bacteria</taxon>
        <taxon>Bacillati</taxon>
        <taxon>Bacillota</taxon>
        <taxon>Clostridia</taxon>
        <taxon>Eubacteriales</taxon>
        <taxon>Clostridiaceae</taxon>
        <taxon>Clostridium</taxon>
    </lineage>
</organism>
<reference key="1">
    <citation type="submission" date="2008-04" db="EMBL/GenBank/DDBJ databases">
        <title>Complete sequence of Clostridium botulinum strain Eklund.</title>
        <authorList>
            <person name="Brinkac L.M."/>
            <person name="Brown J.L."/>
            <person name="Bruce D."/>
            <person name="Detter C."/>
            <person name="Munk C."/>
            <person name="Smith L.A."/>
            <person name="Smith T.J."/>
            <person name="Sutton G."/>
            <person name="Brettin T.S."/>
        </authorList>
    </citation>
    <scope>NUCLEOTIDE SEQUENCE [LARGE SCALE GENOMIC DNA]</scope>
    <source>
        <strain>Eklund 17B / Type B</strain>
    </source>
</reference>
<keyword id="KW-0378">Hydrolase</keyword>
<keyword id="KW-0464">Manganese</keyword>
<comment type="catalytic activity">
    <reaction evidence="1">
        <text>adenine + H2O + H(+) = hypoxanthine + NH4(+)</text>
        <dbReference type="Rhea" id="RHEA:23688"/>
        <dbReference type="ChEBI" id="CHEBI:15377"/>
        <dbReference type="ChEBI" id="CHEBI:15378"/>
        <dbReference type="ChEBI" id="CHEBI:16708"/>
        <dbReference type="ChEBI" id="CHEBI:17368"/>
        <dbReference type="ChEBI" id="CHEBI:28938"/>
        <dbReference type="EC" id="3.5.4.2"/>
    </reaction>
</comment>
<comment type="cofactor">
    <cofactor evidence="1">
        <name>Mn(2+)</name>
        <dbReference type="ChEBI" id="CHEBI:29035"/>
    </cofactor>
</comment>
<comment type="similarity">
    <text evidence="1">Belongs to the metallo-dependent hydrolases superfamily. Adenine deaminase family.</text>
</comment>
<sequence>MKIDMNLLKRRIKVANKEVKADTVVKNGKILNVFTGDIMRGDIAIVDGFIAGIGQYEGEQIIYAQNKVIVPGFIDGHMHIESTMLTPNELSKVLIQHGVTTVMADPHEIGNVAGIDGINFMLNASEELPIDVFIMLPSCVPATSFENSGAKLDAEDLQPFYTHPRVLGLAEFMDFSSIVNLNEKMLQKIINANLNGSIVDGHAPGLSKEELNVYISTGIYADHECANVREAKERLELGMYLMIREGTAAKELKKLIKVVTPTNSRRCMLVTDDKLPDDLIVEGSVDHNVRLAIKEGLDPVTAIQMVTINAAEFFGLRSFGAIAPGYQADLLILDELQNVSIDKVLKKGICVVDNGEIKKEEFKINDNSKELAMKLPKINMKELEKNAFKIPLSSDLCNVIEIVPNSLITYHRVEKVDIDKGNFSVSIANDQLKMAVIERHHATGNIGLGIVKGFGIKNGAIATTVAHDSHNIVVVGTSDEEMFLAVNHLKKMNGGIAIASGKEIIASLPLAIGGLISENGYLEVQQQLKILNQALSIIGVNADFNPFLTLSFLTLPVIPEIKLTDTGLFEFKTFSHIGVQA</sequence>
<dbReference type="EC" id="3.5.4.2" evidence="1"/>
<dbReference type="EMBL" id="CP001056">
    <property type="protein sequence ID" value="ACD22942.1"/>
    <property type="molecule type" value="Genomic_DNA"/>
</dbReference>
<dbReference type="SMR" id="B2TJH6"/>
<dbReference type="KEGG" id="cbk:CLL_A1394"/>
<dbReference type="PATRIC" id="fig|935198.13.peg.1341"/>
<dbReference type="HOGENOM" id="CLU_027935_0_0_9"/>
<dbReference type="Proteomes" id="UP000001195">
    <property type="component" value="Chromosome"/>
</dbReference>
<dbReference type="GO" id="GO:0000034">
    <property type="term" value="F:adenine deaminase activity"/>
    <property type="evidence" value="ECO:0007669"/>
    <property type="project" value="UniProtKB-UniRule"/>
</dbReference>
<dbReference type="GO" id="GO:0006146">
    <property type="term" value="P:adenine catabolic process"/>
    <property type="evidence" value="ECO:0007669"/>
    <property type="project" value="InterPro"/>
</dbReference>
<dbReference type="CDD" id="cd01295">
    <property type="entry name" value="AdeC"/>
    <property type="match status" value="1"/>
</dbReference>
<dbReference type="FunFam" id="3.20.20.140:FF:000016">
    <property type="entry name" value="Adenine deaminase"/>
    <property type="match status" value="1"/>
</dbReference>
<dbReference type="Gene3D" id="3.20.20.140">
    <property type="entry name" value="Metal-dependent hydrolases"/>
    <property type="match status" value="1"/>
</dbReference>
<dbReference type="Gene3D" id="2.30.40.10">
    <property type="entry name" value="Urease, subunit C, domain 1"/>
    <property type="match status" value="1"/>
</dbReference>
<dbReference type="HAMAP" id="MF_01518">
    <property type="entry name" value="Adenine_deamin"/>
    <property type="match status" value="1"/>
</dbReference>
<dbReference type="InterPro" id="IPR006679">
    <property type="entry name" value="Adenine_deam"/>
</dbReference>
<dbReference type="InterPro" id="IPR026912">
    <property type="entry name" value="Adenine_deam_C"/>
</dbReference>
<dbReference type="InterPro" id="IPR006680">
    <property type="entry name" value="Amidohydro-rel"/>
</dbReference>
<dbReference type="InterPro" id="IPR011059">
    <property type="entry name" value="Metal-dep_hydrolase_composite"/>
</dbReference>
<dbReference type="InterPro" id="IPR032466">
    <property type="entry name" value="Metal_Hydrolase"/>
</dbReference>
<dbReference type="NCBIfam" id="TIGR01178">
    <property type="entry name" value="ade"/>
    <property type="match status" value="1"/>
</dbReference>
<dbReference type="PANTHER" id="PTHR11113:SF2">
    <property type="entry name" value="ADENINE DEAMINASE"/>
    <property type="match status" value="1"/>
</dbReference>
<dbReference type="PANTHER" id="PTHR11113">
    <property type="entry name" value="N-ACETYLGLUCOSAMINE-6-PHOSPHATE DEACETYLASE"/>
    <property type="match status" value="1"/>
</dbReference>
<dbReference type="Pfam" id="PF13382">
    <property type="entry name" value="Adenine_deam_C"/>
    <property type="match status" value="1"/>
</dbReference>
<dbReference type="Pfam" id="PF01979">
    <property type="entry name" value="Amidohydro_1"/>
    <property type="match status" value="1"/>
</dbReference>
<dbReference type="SUPFAM" id="SSF51338">
    <property type="entry name" value="Composite domain of metallo-dependent hydrolases"/>
    <property type="match status" value="1"/>
</dbReference>
<dbReference type="SUPFAM" id="SSF51556">
    <property type="entry name" value="Metallo-dependent hydrolases"/>
    <property type="match status" value="1"/>
</dbReference>
<protein>
    <recommendedName>
        <fullName evidence="1">Adenine deaminase</fullName>
        <shortName evidence="1">Adenase</shortName>
        <shortName evidence="1">Adenine aminase</shortName>
        <ecNumber evidence="1">3.5.4.2</ecNumber>
    </recommendedName>
</protein>
<name>ADEC_CLOBB</name>